<protein>
    <recommendedName>
        <fullName>Dosage compensation regulator mle</fullName>
        <ecNumber evidence="11 14">3.6.4.13</ecNumber>
    </recommendedName>
    <alternativeName>
        <fullName>Protein male-less</fullName>
    </alternativeName>
    <alternativeName>
        <fullName evidence="15">Protein maleless</fullName>
    </alternativeName>
    <alternativeName>
        <fullName>Protein no action potential</fullName>
    </alternativeName>
</protein>
<dbReference type="EC" id="3.6.4.13" evidence="11 14"/>
<dbReference type="EMBL" id="M74121">
    <property type="protein sequence ID" value="AAC41573.1"/>
    <property type="molecule type" value="mRNA"/>
</dbReference>
<dbReference type="EMBL" id="AE013599">
    <property type="protein sequence ID" value="AAF57297.1"/>
    <property type="molecule type" value="Genomic_DNA"/>
</dbReference>
<dbReference type="EMBL" id="AE013599">
    <property type="protein sequence ID" value="AAM68335.1"/>
    <property type="molecule type" value="Genomic_DNA"/>
</dbReference>
<dbReference type="EMBL" id="BT003785">
    <property type="protein sequence ID" value="AAO41468.1"/>
    <property type="molecule type" value="mRNA"/>
</dbReference>
<dbReference type="EMBL" id="BT010267">
    <property type="protein sequence ID" value="AAQ23585.1"/>
    <property type="molecule type" value="mRNA"/>
</dbReference>
<dbReference type="PIR" id="B40025">
    <property type="entry name" value="B40025"/>
</dbReference>
<dbReference type="RefSeq" id="NP_476641.1">
    <molecule id="P24785-1"/>
    <property type="nucleotide sequence ID" value="NM_057293.4"/>
</dbReference>
<dbReference type="RefSeq" id="NP_724440.1">
    <molecule id="P24785-3"/>
    <property type="nucleotide sequence ID" value="NM_165451.3"/>
</dbReference>
<dbReference type="PDB" id="5AOR">
    <property type="method" value="X-ray"/>
    <property type="resolution" value="2.08 A"/>
    <property type="chains" value="A/B=1-1293"/>
</dbReference>
<dbReference type="PDB" id="5ZTM">
    <property type="method" value="X-ray"/>
    <property type="resolution" value="2.90 A"/>
    <property type="chains" value="A/B=1-264"/>
</dbReference>
<dbReference type="PDB" id="6I3R">
    <property type="method" value="NMR"/>
    <property type="chains" value="A=1-257"/>
</dbReference>
<dbReference type="PDB" id="8B9G">
    <property type="method" value="EM"/>
    <property type="resolution" value="2.86 A"/>
    <property type="chains" value="A=1-1159"/>
</dbReference>
<dbReference type="PDB" id="8B9I">
    <property type="method" value="EM"/>
    <property type="resolution" value="2.95 A"/>
    <property type="chains" value="A=1-1159"/>
</dbReference>
<dbReference type="PDB" id="8B9J">
    <property type="method" value="EM"/>
    <property type="resolution" value="3.45 A"/>
    <property type="chains" value="A=1-1159"/>
</dbReference>
<dbReference type="PDB" id="8B9K">
    <property type="method" value="EM"/>
    <property type="resolution" value="4.04 A"/>
    <property type="chains" value="A=1-1159"/>
</dbReference>
<dbReference type="PDB" id="8B9L">
    <property type="method" value="EM"/>
    <property type="resolution" value="3.45 A"/>
    <property type="chains" value="A=1-1159"/>
</dbReference>
<dbReference type="PDB" id="8PJB">
    <property type="method" value="EM"/>
    <property type="resolution" value="3.62 A"/>
    <property type="chains" value="A=1-1158"/>
</dbReference>
<dbReference type="PDB" id="8PJJ">
    <property type="method" value="EM"/>
    <property type="resolution" value="4.24 A"/>
    <property type="chains" value="A=1-1158"/>
</dbReference>
<dbReference type="PDBsum" id="5AOR"/>
<dbReference type="PDBsum" id="5ZTM"/>
<dbReference type="PDBsum" id="6I3R"/>
<dbReference type="PDBsum" id="8B9G"/>
<dbReference type="PDBsum" id="8B9I"/>
<dbReference type="PDBsum" id="8B9J"/>
<dbReference type="PDBsum" id="8B9K"/>
<dbReference type="PDBsum" id="8B9L"/>
<dbReference type="PDBsum" id="8PJB"/>
<dbReference type="PDBsum" id="8PJJ"/>
<dbReference type="EMDB" id="EMD-15931"/>
<dbReference type="EMDB" id="EMD-15932"/>
<dbReference type="EMDB" id="EMD-15933"/>
<dbReference type="EMDB" id="EMD-15934"/>
<dbReference type="EMDB" id="EMD-15935"/>
<dbReference type="EMDB" id="EMD-17703"/>
<dbReference type="EMDB" id="EMD-17711"/>
<dbReference type="SASBDB" id="P24785"/>
<dbReference type="SMR" id="P24785"/>
<dbReference type="BioGRID" id="61429">
    <property type="interactions" value="44"/>
</dbReference>
<dbReference type="ComplexPortal" id="CPX-2340">
    <property type="entry name" value="Male specific lethal complex"/>
</dbReference>
<dbReference type="FunCoup" id="P24785">
    <property type="interactions" value="1555"/>
</dbReference>
<dbReference type="IntAct" id="P24785">
    <property type="interactions" value="27"/>
</dbReference>
<dbReference type="STRING" id="7227.FBpp0085367"/>
<dbReference type="PaxDb" id="7227-FBpp0085367"/>
<dbReference type="EnsemblMetazoa" id="FBtr0086031">
    <molecule id="P24785-1"/>
    <property type="protein sequence ID" value="FBpp0085367"/>
    <property type="gene ID" value="FBgn0002774"/>
</dbReference>
<dbReference type="EnsemblMetazoa" id="FBtr0100576">
    <molecule id="P24785-3"/>
    <property type="protein sequence ID" value="FBpp0100031"/>
    <property type="gene ID" value="FBgn0002774"/>
</dbReference>
<dbReference type="GeneID" id="35523"/>
<dbReference type="KEGG" id="dme:Dmel_CG11680"/>
<dbReference type="AGR" id="FB:FBgn0002774"/>
<dbReference type="CTD" id="35523"/>
<dbReference type="FlyBase" id="FBgn0002774">
    <property type="gene designation" value="mle"/>
</dbReference>
<dbReference type="VEuPathDB" id="VectorBase:FBgn0002774"/>
<dbReference type="eggNOG" id="KOG0921">
    <property type="taxonomic scope" value="Eukaryota"/>
</dbReference>
<dbReference type="GeneTree" id="ENSGT00940000155924"/>
<dbReference type="InParanoid" id="P24785"/>
<dbReference type="OMA" id="ANWNTWH"/>
<dbReference type="OrthoDB" id="5600252at2759"/>
<dbReference type="PhylomeDB" id="P24785"/>
<dbReference type="Reactome" id="R-DME-1810476">
    <property type="pathway name" value="RIP-mediated NFkB activation via ZBP1"/>
</dbReference>
<dbReference type="Reactome" id="R-DME-3134963">
    <property type="pathway name" value="DEx/H-box helicases activate type I IFN and inflammatory cytokines production"/>
</dbReference>
<dbReference type="Reactome" id="R-DME-9833482">
    <property type="pathway name" value="PKR-mediated signaling"/>
</dbReference>
<dbReference type="SignaLink" id="P24785"/>
<dbReference type="BioGRID-ORCS" id="35523">
    <property type="hits" value="0 hits in 1 CRISPR screen"/>
</dbReference>
<dbReference type="EvolutionaryTrace" id="P24785"/>
<dbReference type="GenomeRNAi" id="35523"/>
<dbReference type="PRO" id="PR:P24785"/>
<dbReference type="Proteomes" id="UP000000803">
    <property type="component" value="Chromosome 2R"/>
</dbReference>
<dbReference type="Bgee" id="FBgn0002774">
    <property type="expression patterns" value="Expressed in intestinal stem cell (Drosophila) in digestive tract and 231 other cell types or tissues"/>
</dbReference>
<dbReference type="ExpressionAtlas" id="P24785">
    <property type="expression patterns" value="baseline and differential"/>
</dbReference>
<dbReference type="GO" id="GO:0000785">
    <property type="term" value="C:chromatin"/>
    <property type="evidence" value="ECO:0000314"/>
    <property type="project" value="FlyBase"/>
</dbReference>
<dbReference type="GO" id="GO:0005694">
    <property type="term" value="C:chromosome"/>
    <property type="evidence" value="ECO:0000314"/>
    <property type="project" value="FlyBase"/>
</dbReference>
<dbReference type="GO" id="GO:0005829">
    <property type="term" value="C:cytosol"/>
    <property type="evidence" value="ECO:0000314"/>
    <property type="project" value="FlyBase"/>
</dbReference>
<dbReference type="GO" id="GO:0072487">
    <property type="term" value="C:MSL complex"/>
    <property type="evidence" value="ECO:0000314"/>
    <property type="project" value="UniProtKB"/>
</dbReference>
<dbReference type="GO" id="GO:0000228">
    <property type="term" value="C:nuclear chromosome"/>
    <property type="evidence" value="ECO:0000314"/>
    <property type="project" value="FlyBase"/>
</dbReference>
<dbReference type="GO" id="GO:0005730">
    <property type="term" value="C:nucleolus"/>
    <property type="evidence" value="ECO:0000318"/>
    <property type="project" value="GO_Central"/>
</dbReference>
<dbReference type="GO" id="GO:0005634">
    <property type="term" value="C:nucleus"/>
    <property type="evidence" value="ECO:0000314"/>
    <property type="project" value="FlyBase"/>
</dbReference>
<dbReference type="GO" id="GO:1990904">
    <property type="term" value="C:ribonucleoprotein complex"/>
    <property type="evidence" value="ECO:0000250"/>
    <property type="project" value="UniProtKB"/>
</dbReference>
<dbReference type="GO" id="GO:0000805">
    <property type="term" value="C:X chromosome"/>
    <property type="evidence" value="ECO:0000314"/>
    <property type="project" value="UniProtKB"/>
</dbReference>
<dbReference type="GO" id="GO:0016456">
    <property type="term" value="C:X chromosome located dosage compensation complex, transcription activating"/>
    <property type="evidence" value="ECO:0000314"/>
    <property type="project" value="UniProtKB"/>
</dbReference>
<dbReference type="GO" id="GO:0043138">
    <property type="term" value="F:3'-5' DNA helicase activity"/>
    <property type="evidence" value="ECO:0000318"/>
    <property type="project" value="GO_Central"/>
</dbReference>
<dbReference type="GO" id="GO:0033679">
    <property type="term" value="F:3'-5' DNA/RNA helicase activity"/>
    <property type="evidence" value="ECO:0007669"/>
    <property type="project" value="InterPro"/>
</dbReference>
<dbReference type="GO" id="GO:0034458">
    <property type="term" value="F:3'-5' RNA helicase activity"/>
    <property type="evidence" value="ECO:0000315"/>
    <property type="project" value="CACAO"/>
</dbReference>
<dbReference type="GO" id="GO:0005524">
    <property type="term" value="F:ATP binding"/>
    <property type="evidence" value="ECO:0007669"/>
    <property type="project" value="UniProtKB-KW"/>
</dbReference>
<dbReference type="GO" id="GO:0016887">
    <property type="term" value="F:ATP hydrolysis activity"/>
    <property type="evidence" value="ECO:0000318"/>
    <property type="project" value="GO_Central"/>
</dbReference>
<dbReference type="GO" id="GO:0003682">
    <property type="term" value="F:chromatin binding"/>
    <property type="evidence" value="ECO:0000314"/>
    <property type="project" value="FlyBase"/>
</dbReference>
<dbReference type="GO" id="GO:0003678">
    <property type="term" value="F:DNA helicase activity"/>
    <property type="evidence" value="ECO:0000250"/>
    <property type="project" value="UniProtKB"/>
</dbReference>
<dbReference type="GO" id="GO:0003690">
    <property type="term" value="F:double-stranded DNA binding"/>
    <property type="evidence" value="ECO:0000250"/>
    <property type="project" value="UniProtKB"/>
</dbReference>
<dbReference type="GO" id="GO:0003725">
    <property type="term" value="F:double-stranded RNA binding"/>
    <property type="evidence" value="ECO:0000250"/>
    <property type="project" value="UniProtKB"/>
</dbReference>
<dbReference type="GO" id="GO:0004386">
    <property type="term" value="F:helicase activity"/>
    <property type="evidence" value="ECO:0000250"/>
    <property type="project" value="FlyBase"/>
</dbReference>
<dbReference type="GO" id="GO:0106222">
    <property type="term" value="F:lncRNA binding"/>
    <property type="evidence" value="ECO:0000314"/>
    <property type="project" value="UniProtKB"/>
</dbReference>
<dbReference type="GO" id="GO:0001069">
    <property type="term" value="F:regulatory region RNA binding"/>
    <property type="evidence" value="ECO:0000314"/>
    <property type="project" value="UniProtKB"/>
</dbReference>
<dbReference type="GO" id="GO:0003723">
    <property type="term" value="F:RNA binding"/>
    <property type="evidence" value="ECO:0000318"/>
    <property type="project" value="GO_Central"/>
</dbReference>
<dbReference type="GO" id="GO:0003724">
    <property type="term" value="F:RNA helicase activity"/>
    <property type="evidence" value="ECO:0000314"/>
    <property type="project" value="UniProtKB"/>
</dbReference>
<dbReference type="GO" id="GO:0048675">
    <property type="term" value="P:axon extension"/>
    <property type="evidence" value="ECO:0000315"/>
    <property type="project" value="FlyBase"/>
</dbReference>
<dbReference type="GO" id="GO:0006325">
    <property type="term" value="P:chromatin organization"/>
    <property type="evidence" value="ECO:0000250"/>
    <property type="project" value="UniProtKB"/>
</dbReference>
<dbReference type="GO" id="GO:0008340">
    <property type="term" value="P:determination of adult lifespan"/>
    <property type="evidence" value="ECO:0000315"/>
    <property type="project" value="FlyBase"/>
</dbReference>
<dbReference type="GO" id="GO:0009047">
    <property type="term" value="P:dosage compensation by hyperactivation of X chromosome"/>
    <property type="evidence" value="ECO:0000314"/>
    <property type="project" value="UniProtKB"/>
</dbReference>
<dbReference type="GO" id="GO:0042714">
    <property type="term" value="P:dosage compensation complex assembly"/>
    <property type="evidence" value="ECO:0000314"/>
    <property type="project" value="UniProtKB"/>
</dbReference>
<dbReference type="GO" id="GO:0045433">
    <property type="term" value="P:male courtship behavior, veined wing generated song production"/>
    <property type="evidence" value="ECO:0000316"/>
    <property type="project" value="FlyBase"/>
</dbReference>
<dbReference type="GO" id="GO:0031453">
    <property type="term" value="P:positive regulation of heterochromatin formation"/>
    <property type="evidence" value="ECO:0000316"/>
    <property type="project" value="FlyBase"/>
</dbReference>
<dbReference type="GO" id="GO:0045944">
    <property type="term" value="P:positive regulation of transcription by RNA polymerase II"/>
    <property type="evidence" value="ECO:0000315"/>
    <property type="project" value="FlyBase"/>
</dbReference>
<dbReference type="GO" id="GO:2000765">
    <property type="term" value="P:regulation of cytoplasmic translation"/>
    <property type="evidence" value="ECO:0000250"/>
    <property type="project" value="UniProtKB"/>
</dbReference>
<dbReference type="GO" id="GO:0050684">
    <property type="term" value="P:regulation of mRNA processing"/>
    <property type="evidence" value="ECO:0000250"/>
    <property type="project" value="UniProtKB"/>
</dbReference>
<dbReference type="GO" id="GO:0007549">
    <property type="term" value="P:sex-chromosome dosage compensation"/>
    <property type="evidence" value="ECO:0000314"/>
    <property type="project" value="FlyBase"/>
</dbReference>
<dbReference type="CDD" id="cd17972">
    <property type="entry name" value="DEXHc_DHX9"/>
    <property type="match status" value="1"/>
</dbReference>
<dbReference type="CDD" id="cd19854">
    <property type="entry name" value="DSRM_DHX9_rpt1"/>
    <property type="match status" value="1"/>
</dbReference>
<dbReference type="CDD" id="cd19855">
    <property type="entry name" value="DSRM_DHX9_rpt2"/>
    <property type="match status" value="1"/>
</dbReference>
<dbReference type="CDD" id="cd18791">
    <property type="entry name" value="SF2_C_RHA"/>
    <property type="match status" value="1"/>
</dbReference>
<dbReference type="DisProt" id="DP02836"/>
<dbReference type="FunFam" id="3.30.160.20:FF:000026">
    <property type="entry name" value="ATP-dependent RNA helicase A"/>
    <property type="match status" value="1"/>
</dbReference>
<dbReference type="FunFam" id="3.30.160.20:FF:000028">
    <property type="entry name" value="ATP-dependent RNA helicase A"/>
    <property type="match status" value="1"/>
</dbReference>
<dbReference type="FunFam" id="3.40.50.300:FF:000677">
    <property type="entry name" value="ATP-dependent RNA helicase A"/>
    <property type="match status" value="1"/>
</dbReference>
<dbReference type="FunFam" id="1.20.120.1080:FF:000025">
    <property type="entry name" value="Dosage compensation regulator"/>
    <property type="match status" value="1"/>
</dbReference>
<dbReference type="FunFam" id="3.40.50.300:FF:000284">
    <property type="entry name" value="probable ATP-dependent RNA helicase YTHDC2"/>
    <property type="match status" value="1"/>
</dbReference>
<dbReference type="Gene3D" id="1.20.120.1080">
    <property type="match status" value="1"/>
</dbReference>
<dbReference type="Gene3D" id="3.30.160.20">
    <property type="match status" value="2"/>
</dbReference>
<dbReference type="Gene3D" id="3.40.50.300">
    <property type="entry name" value="P-loop containing nucleotide triphosphate hydrolases"/>
    <property type="match status" value="2"/>
</dbReference>
<dbReference type="InterPro" id="IPR011709">
    <property type="entry name" value="DEAD-box_helicase_OB_fold"/>
</dbReference>
<dbReference type="InterPro" id="IPR011545">
    <property type="entry name" value="DEAD/DEAH_box_helicase_dom"/>
</dbReference>
<dbReference type="InterPro" id="IPR044447">
    <property type="entry name" value="DHX9_DEXHc"/>
</dbReference>
<dbReference type="InterPro" id="IPR044445">
    <property type="entry name" value="DHX9_DSRM_1"/>
</dbReference>
<dbReference type="InterPro" id="IPR044446">
    <property type="entry name" value="DHX9_DSRM_2"/>
</dbReference>
<dbReference type="InterPro" id="IPR002464">
    <property type="entry name" value="DNA/RNA_helicase_DEAH_CS"/>
</dbReference>
<dbReference type="InterPro" id="IPR014720">
    <property type="entry name" value="dsRBD_dom"/>
</dbReference>
<dbReference type="InterPro" id="IPR048333">
    <property type="entry name" value="HA2_WH"/>
</dbReference>
<dbReference type="InterPro" id="IPR007502">
    <property type="entry name" value="Helicase-assoc_dom"/>
</dbReference>
<dbReference type="InterPro" id="IPR014001">
    <property type="entry name" value="Helicase_ATP-bd"/>
</dbReference>
<dbReference type="InterPro" id="IPR001650">
    <property type="entry name" value="Helicase_C-like"/>
</dbReference>
<dbReference type="InterPro" id="IPR027417">
    <property type="entry name" value="P-loop_NTPase"/>
</dbReference>
<dbReference type="PANTHER" id="PTHR18934">
    <property type="entry name" value="ATP-DEPENDENT RNA HELICASE"/>
    <property type="match status" value="1"/>
</dbReference>
<dbReference type="PANTHER" id="PTHR18934:SF119">
    <property type="entry name" value="ATP-DEPENDENT RNA HELICASE A"/>
    <property type="match status" value="1"/>
</dbReference>
<dbReference type="Pfam" id="PF00270">
    <property type="entry name" value="DEAD"/>
    <property type="match status" value="1"/>
</dbReference>
<dbReference type="Pfam" id="PF00035">
    <property type="entry name" value="dsrm"/>
    <property type="match status" value="2"/>
</dbReference>
<dbReference type="Pfam" id="PF21010">
    <property type="entry name" value="HA2_C"/>
    <property type="match status" value="1"/>
</dbReference>
<dbReference type="Pfam" id="PF04408">
    <property type="entry name" value="HA2_N"/>
    <property type="match status" value="1"/>
</dbReference>
<dbReference type="Pfam" id="PF00271">
    <property type="entry name" value="Helicase_C"/>
    <property type="match status" value="1"/>
</dbReference>
<dbReference type="Pfam" id="PF07717">
    <property type="entry name" value="OB_NTP_bind"/>
    <property type="match status" value="1"/>
</dbReference>
<dbReference type="SMART" id="SM00487">
    <property type="entry name" value="DEXDc"/>
    <property type="match status" value="1"/>
</dbReference>
<dbReference type="SMART" id="SM00358">
    <property type="entry name" value="DSRM"/>
    <property type="match status" value="2"/>
</dbReference>
<dbReference type="SMART" id="SM00847">
    <property type="entry name" value="HA2"/>
    <property type="match status" value="1"/>
</dbReference>
<dbReference type="SMART" id="SM00490">
    <property type="entry name" value="HELICc"/>
    <property type="match status" value="1"/>
</dbReference>
<dbReference type="SUPFAM" id="SSF54768">
    <property type="entry name" value="dsRNA-binding domain-like"/>
    <property type="match status" value="2"/>
</dbReference>
<dbReference type="SUPFAM" id="SSF52540">
    <property type="entry name" value="P-loop containing nucleoside triphosphate hydrolases"/>
    <property type="match status" value="1"/>
</dbReference>
<dbReference type="PROSITE" id="PS00690">
    <property type="entry name" value="DEAH_ATP_HELICASE"/>
    <property type="match status" value="1"/>
</dbReference>
<dbReference type="PROSITE" id="PS50137">
    <property type="entry name" value="DS_RBD"/>
    <property type="match status" value="2"/>
</dbReference>
<dbReference type="PROSITE" id="PS51192">
    <property type="entry name" value="HELICASE_ATP_BIND_1"/>
    <property type="match status" value="1"/>
</dbReference>
<dbReference type="PROSITE" id="PS51194">
    <property type="entry name" value="HELICASE_CTER"/>
    <property type="match status" value="1"/>
</dbReference>
<comment type="function">
    <text evidence="7 8 10 11 12 13">RNA helicase component of the male-specific lethal (MSL) histone acetyltransferase complex, a multiprotein complex essential for elevating transcription of the single X chromosome in the male (X chromosome dosage compensation) (PubMed:1653648, PubMed:25158899, PubMed:26545078). Within the MSL complex, the helicase activity of mle remodels roX non-coding RNA (roX1 and roX2)s to promote assembly of the MSL complex (PubMed:23870142, PubMed:26545078, PubMed:30649456, PubMed:30805612). Able to unwind blunt-ended RNA duplexes and has specificity for uridine-rich nucleotides (PubMed:26545078).</text>
</comment>
<comment type="catalytic activity">
    <reaction evidence="11 14">
        <text>ATP + H2O = ADP + phosphate + H(+)</text>
        <dbReference type="Rhea" id="RHEA:13065"/>
        <dbReference type="ChEBI" id="CHEBI:15377"/>
        <dbReference type="ChEBI" id="CHEBI:15378"/>
        <dbReference type="ChEBI" id="CHEBI:30616"/>
        <dbReference type="ChEBI" id="CHEBI:43474"/>
        <dbReference type="ChEBI" id="CHEBI:456216"/>
        <dbReference type="EC" id="3.6.4.13"/>
    </reaction>
    <physiologicalReaction direction="left-to-right" evidence="14">
        <dbReference type="Rhea" id="RHEA:13066"/>
    </physiologicalReaction>
</comment>
<comment type="subunit">
    <text evidence="5 6 8 9 10">Component of the male-specific lethal (MSL) histone acetyltransferase complex, composed of mof, mle, msl-1, msl-2 and msl-3 proteins, as well as roX1 and roX2 non-coding RNAs (PubMed:10679323, PubMed:11014199, PubMed:23870142). Interacts with Unr; promoting association between mle and roX2 non-coding RNA (PubMed:25158899). Interacts with Top2 (PubMed:23989663).</text>
</comment>
<comment type="subcellular location">
    <subcellularLocation>
        <location evidence="7">Nucleus</location>
    </subcellularLocation>
    <subcellularLocation>
        <location evidence="7 12 13">Chromosome</location>
    </subcellularLocation>
    <text evidence="7 12 13">Mle is associated with hundreds of discrete sites along the length of the X chromosome in males and not in females, and is associated with 30-40 autosomal sites in both sexes.</text>
</comment>
<comment type="alternative products">
    <event type="alternative splicing"/>
    <isoform>
        <id>P24785-1</id>
        <name>A</name>
        <name>25</name>
        <sequence type="displayed"/>
    </isoform>
    <isoform>
        <id>P24785-2</id>
        <name>12</name>
        <sequence type="described" ref="VSP_005775 VSP_005776"/>
    </isoform>
    <isoform>
        <id>P24785-3</id>
        <name>B</name>
        <sequence type="described" ref="VSP_015690"/>
    </isoform>
    <text>Additional isoforms seem to exist.</text>
</comment>
<comment type="developmental stage">
    <text evidence="7">Expressed throughout development; highest in embryos and at equal levels in males and females.</text>
</comment>
<comment type="similarity">
    <text evidence="17">Belongs to the DEAD box helicase family. DEAH subfamily.</text>
</comment>
<gene>
    <name evidence="15 18" type="primary">mle</name>
    <name evidence="18" type="synonym">nap</name>
    <name evidence="18" type="ORF">CG11680</name>
</gene>
<proteinExistence type="evidence at protein level"/>
<accession>P24785</accession>
<accession>Q86NQ4</accession>
<accession>Q9V9J1</accession>
<name>MLE_DROME</name>
<organism>
    <name type="scientific">Drosophila melanogaster</name>
    <name type="common">Fruit fly</name>
    <dbReference type="NCBI Taxonomy" id="7227"/>
    <lineage>
        <taxon>Eukaryota</taxon>
        <taxon>Metazoa</taxon>
        <taxon>Ecdysozoa</taxon>
        <taxon>Arthropoda</taxon>
        <taxon>Hexapoda</taxon>
        <taxon>Insecta</taxon>
        <taxon>Pterygota</taxon>
        <taxon>Neoptera</taxon>
        <taxon>Endopterygota</taxon>
        <taxon>Diptera</taxon>
        <taxon>Brachycera</taxon>
        <taxon>Muscomorpha</taxon>
        <taxon>Ephydroidea</taxon>
        <taxon>Drosophilidae</taxon>
        <taxon>Drosophila</taxon>
        <taxon>Sophophora</taxon>
    </lineage>
</organism>
<evidence type="ECO:0000255" key="1">
    <source>
        <dbReference type="PROSITE-ProRule" id="PRU00266"/>
    </source>
</evidence>
<evidence type="ECO:0000255" key="2">
    <source>
        <dbReference type="PROSITE-ProRule" id="PRU00541"/>
    </source>
</evidence>
<evidence type="ECO:0000255" key="3">
    <source>
        <dbReference type="PROSITE-ProRule" id="PRU00542"/>
    </source>
</evidence>
<evidence type="ECO:0000256" key="4">
    <source>
        <dbReference type="SAM" id="MobiDB-lite"/>
    </source>
</evidence>
<evidence type="ECO:0000269" key="5">
    <source>
    </source>
</evidence>
<evidence type="ECO:0000269" key="6">
    <source>
    </source>
</evidence>
<evidence type="ECO:0000269" key="7">
    <source>
    </source>
</evidence>
<evidence type="ECO:0000269" key="8">
    <source>
    </source>
</evidence>
<evidence type="ECO:0000269" key="9">
    <source>
    </source>
</evidence>
<evidence type="ECO:0000269" key="10">
    <source>
    </source>
</evidence>
<evidence type="ECO:0000269" key="11">
    <source>
    </source>
</evidence>
<evidence type="ECO:0000269" key="12">
    <source>
    </source>
</evidence>
<evidence type="ECO:0000269" key="13">
    <source>
    </source>
</evidence>
<evidence type="ECO:0000269" key="14">
    <source>
    </source>
</evidence>
<evidence type="ECO:0000303" key="15">
    <source>
    </source>
</evidence>
<evidence type="ECO:0000303" key="16">
    <source ref="4"/>
</evidence>
<evidence type="ECO:0000305" key="17"/>
<evidence type="ECO:0000312" key="18">
    <source>
        <dbReference type="FlyBase" id="FBgn0002774"/>
    </source>
</evidence>
<evidence type="ECO:0007744" key="19">
    <source>
        <dbReference type="PDB" id="5AOR"/>
    </source>
</evidence>
<evidence type="ECO:0007744" key="20">
    <source>
        <dbReference type="PDB" id="5ZTM"/>
    </source>
</evidence>
<evidence type="ECO:0007744" key="21">
    <source>
        <dbReference type="PDB" id="6I3R"/>
    </source>
</evidence>
<evidence type="ECO:0007829" key="22">
    <source>
        <dbReference type="PDB" id="5AOR"/>
    </source>
</evidence>
<evidence type="ECO:0007829" key="23">
    <source>
        <dbReference type="PDB" id="5ZTM"/>
    </source>
</evidence>
<evidence type="ECO:0007829" key="24">
    <source>
        <dbReference type="PDB" id="6I3R"/>
    </source>
</evidence>
<evidence type="ECO:0007829" key="25">
    <source>
        <dbReference type="PDB" id="8B9I"/>
    </source>
</evidence>
<evidence type="ECO:0007829" key="26">
    <source>
        <dbReference type="PDB" id="8B9J"/>
    </source>
</evidence>
<evidence type="ECO:0007829" key="27">
    <source>
        <dbReference type="PDB" id="8B9L"/>
    </source>
</evidence>
<sequence>MDIKSFLYQFCAKSQIEPKFDIRQTGPKNRQRFLCEVRVEPNTYIGVGNSTNKKDAEKNACRDFVNYLVRVGKLNTNDVPADAGASGGGPRTGLEGAGMAGGSGQQKRVFDGQSGPQDLGEAYRPLNHDGGDGGNRYSVIDRIQEQRDMNEAEAFDVNAAIHGNWTIENAKERLNIYKQTNNIRDDYKYTPVGPEHARSFLAELSIYVPALNRTVTARESGSNKKSASKSCALSLVRQLFHLNVIEPFSGTLKKKKDEQLKPYPVKLSPNLINKIDEVIKGLDLPVVNPRNIKIELDGPPIPLIVNLSRIDSSQQDGEKRQESSVIPWAPPQANWNTWHACNIDEGELATTSIDDLSMDYERSLRDRRQNDNEYRQFLEFREKLPIAAMRSEILTAINDNPVVIIRGNTGCGKTTQIAQYILDDYICSGQGGYANIYVTQPRRISAISVAERVARERCEQLGDTVGYSVRFESVFPRPYGAILFCTVGVLLRKLEAGLRGVSHIIVDEIHERDVNSDFLLVILRDMVDTYPDLHVILMSATIDTTKFSKYFGICPVLEVPGRAFPVQQFFLEDIIQMTDFVPSAESRRKRKEVEDEEQLLSEDKDEAEINYNKVCEDKYSQKTRNAMAMLSESDVSFELLEALLMHIKSKNIPGAILVFLPGWNLIFALMKFLQNTNIFGDTSQYQILPCHSQIPRDEQRKVFEPVPEGVTKIILSTNIAETSITIDDIVFVIDICKARMKLFTSHNNLTSYATVWASKTNLEQRKGRAGRVRPGFCFTLCSRARFQALEDNLTPEMFRTPLHEMALTIKLLRLGSIHHFLSKALEPPPVDAVIEAEVLLREMRCLDANDELTPLGRLLARLPIEPRLGKMMVLGAVFGCADLMAIMASYSSTFSEVFSLDIGQRRLANHQKALSGTKCSDHVAMIVASQMWRREKQRGEHMEARFCDWKGLQMSTMNVIWDAKQQLLDLLQQAGFPEECMISHEVDERIDGDDPVLDVSLALLCLGLYPNICVHKEKRKVLTTESKAALLHKTSVNCSNLAVTFPYPFFVFGEKIRTRAVSCKQLSMVSPLQVILFGSRKIDLAANNIVRVDNWLNFDIEPELAAKIGALKPALEDLITVACDNPSDILRLEEPYAQLVKVVKDLCVKSAGDFGLQRESGILPHQSRQFSDGGGPPKRGRFETGRFTNSSFGRRGNGRTFGGGYGNNGGGYGNNGGGYGNIGGGYGNNAGGYGNNGGYGNNGGGYRNNGGGYGNNGGGYGNKRGGFGDSFESNRGSGGGFRNGDQGGRWGNF</sequence>
<feature type="chain" id="PRO_0000055181" description="Dosage compensation regulator mle">
    <location>
        <begin position="1"/>
        <end position="1293"/>
    </location>
</feature>
<feature type="domain" description="DRBM 1" evidence="1">
    <location>
        <begin position="2"/>
        <end position="70"/>
    </location>
</feature>
<feature type="domain" description="DRBM 2" evidence="1">
    <location>
        <begin position="169"/>
        <end position="241"/>
    </location>
</feature>
<feature type="domain" description="Helicase ATP-binding" evidence="2">
    <location>
        <begin position="394"/>
        <end position="560"/>
    </location>
</feature>
<feature type="domain" description="Helicase C-terminal" evidence="3">
    <location>
        <begin position="639"/>
        <end position="813"/>
    </location>
</feature>
<feature type="repeat" description="1">
    <location>
        <begin position="1202"/>
        <end position="1208"/>
    </location>
</feature>
<feature type="repeat" description="2">
    <location>
        <begin position="1209"/>
        <end position="1215"/>
    </location>
</feature>
<feature type="repeat" description="3">
    <location>
        <begin position="1216"/>
        <end position="1222"/>
    </location>
</feature>
<feature type="repeat" description="4">
    <location>
        <begin position="1223"/>
        <end position="1229"/>
    </location>
</feature>
<feature type="repeat" description="5">
    <location>
        <begin position="1230"/>
        <end position="1236"/>
    </location>
</feature>
<feature type="repeat" description="6">
    <location>
        <begin position="1237"/>
        <end position="1243"/>
    </location>
</feature>
<feature type="repeat" description="7">
    <location>
        <begin position="1244"/>
        <end position="1250"/>
    </location>
</feature>
<feature type="repeat" description="8">
    <location>
        <begin position="1251"/>
        <end position="1257"/>
    </location>
</feature>
<feature type="repeat" description="9">
    <location>
        <begin position="1258"/>
        <end position="1263"/>
    </location>
</feature>
<feature type="region of interest" description="Disordered" evidence="4">
    <location>
        <begin position="80"/>
        <end position="115"/>
    </location>
</feature>
<feature type="region of interest" description="Disordered" evidence="4">
    <location>
        <begin position="1165"/>
        <end position="1198"/>
    </location>
</feature>
<feature type="region of interest" description="9 X 7 AA tandem repeats of G-G-G-Y-G-N-N">
    <location>
        <begin position="1202"/>
        <end position="1263"/>
    </location>
</feature>
<feature type="region of interest" description="Disordered" evidence="4">
    <location>
        <begin position="1268"/>
        <end position="1293"/>
    </location>
</feature>
<feature type="short sequence motif" description="DEAH box">
    <location>
        <begin position="507"/>
        <end position="510"/>
    </location>
</feature>
<feature type="compositionally biased region" description="Gly residues" evidence="4">
    <location>
        <begin position="85"/>
        <end position="104"/>
    </location>
</feature>
<feature type="compositionally biased region" description="Gly residues" evidence="4">
    <location>
        <begin position="1276"/>
        <end position="1293"/>
    </location>
</feature>
<feature type="binding site" evidence="19">
    <location>
        <position position="410"/>
    </location>
    <ligand>
        <name>ATP</name>
        <dbReference type="ChEBI" id="CHEBI:30616"/>
    </ligand>
</feature>
<feature type="binding site" evidence="19">
    <location>
        <position position="412"/>
    </location>
    <ligand>
        <name>ATP</name>
        <dbReference type="ChEBI" id="CHEBI:30616"/>
    </ligand>
</feature>
<feature type="binding site" evidence="19">
    <location>
        <position position="413"/>
    </location>
    <ligand>
        <name>ATP</name>
        <dbReference type="ChEBI" id="CHEBI:30616"/>
    </ligand>
</feature>
<feature type="binding site" evidence="19">
    <location>
        <position position="414"/>
    </location>
    <ligand>
        <name>ATP</name>
        <dbReference type="ChEBI" id="CHEBI:30616"/>
    </ligand>
</feature>
<feature type="binding site" evidence="19">
    <location>
        <position position="414"/>
    </location>
    <ligand>
        <name>Mg(2+)</name>
        <dbReference type="ChEBI" id="CHEBI:18420"/>
    </ligand>
</feature>
<feature type="binding site" evidence="19">
    <location>
        <position position="415"/>
    </location>
    <ligand>
        <name>ATP</name>
        <dbReference type="ChEBI" id="CHEBI:30616"/>
    </ligand>
</feature>
<feature type="binding site" evidence="19">
    <location>
        <position position="507"/>
    </location>
    <ligand>
        <name>Mg(2+)</name>
        <dbReference type="ChEBI" id="CHEBI:18420"/>
    </ligand>
</feature>
<feature type="binding site" evidence="19">
    <location>
        <position position="508"/>
    </location>
    <ligand>
        <name>Mg(2+)</name>
        <dbReference type="ChEBI" id="CHEBI:18420"/>
    </ligand>
</feature>
<feature type="binding site" evidence="19">
    <location>
        <position position="771"/>
    </location>
    <ligand>
        <name>ATP</name>
        <dbReference type="ChEBI" id="CHEBI:30616"/>
    </ligand>
</feature>
<feature type="splice variant" id="VSP_015690" description="In isoform B." evidence="16">
    <location>
        <begin position="1"/>
        <end position="357"/>
    </location>
</feature>
<feature type="splice variant" id="VSP_005775" description="In isoform 12." evidence="15">
    <original>SFLAELSIYVPALNRTVTARESGSNKKS</original>
    <variation>YVLPFQLSSACISDLTRYGLRPNLKCSP</variation>
    <location>
        <begin position="199"/>
        <end position="226"/>
    </location>
</feature>
<feature type="splice variant" id="VSP_005776" description="In isoform 12." evidence="15">
    <location>
        <begin position="227"/>
        <end position="1293"/>
    </location>
</feature>
<feature type="sequence variant">
    <original>G</original>
    <variation>V</variation>
    <location>
        <position position="1276"/>
    </location>
</feature>
<feature type="mutagenesis site" description="Decreased binding to roX2 non-coding RNA." evidence="13">
    <original>KS</original>
    <variation>EA</variation>
    <location>
        <begin position="4"/>
        <end position="5"/>
    </location>
</feature>
<feature type="mutagenesis site" description="Slightly decreased binding to roX2 non-conding RNA, leading to decreased localization to male X chromosome." evidence="12">
    <original>K</original>
    <variation>E</variation>
    <location>
        <position position="4"/>
    </location>
</feature>
<feature type="mutagenesis site" description="Does not affect binding to roX2 non-coding RNA." evidence="13">
    <original>N</original>
    <variation>A</variation>
    <location>
        <position position="29"/>
    </location>
</feature>
<feature type="mutagenesis site" description="Knockin flies show male lethality due to impaired binding to roX2 non-coding RNA." evidence="13">
    <original>NKKDAEK</original>
    <variation>AEEDAEE</variation>
    <location>
        <begin position="52"/>
        <end position="58"/>
    </location>
</feature>
<feature type="mutagenesis site" description="Impaired binding to roX2 non-conding RNA, leading to decreased localization to male X chromosome." evidence="12">
    <original>K</original>
    <variation>E</variation>
    <location>
        <position position="53"/>
    </location>
</feature>
<feature type="mutagenesis site" description="Impaired binding to roX2 non-conding RNA, leading to decreased localization to male X chromosome." evidence="12">
    <original>K</original>
    <variation>E</variation>
    <location>
        <position position="54"/>
    </location>
</feature>
<feature type="mutagenesis site" description="Decreased binding to roX2 non-coding RNA." evidence="13">
    <original>KERLN</original>
    <variation>EERLA</variation>
    <location>
        <begin position="171"/>
        <end position="175"/>
    </location>
</feature>
<feature type="mutagenesis site" description="Slightly increased binding to roX2 non-coding RNA." evidence="13">
    <original>E</original>
    <variation>A</variation>
    <location>
        <position position="172"/>
    </location>
</feature>
<feature type="mutagenesis site" description="Slightly increased binding to roX2 non-coding RNA." evidence="13">
    <original>E</original>
    <variation>A</variation>
    <location>
        <position position="195"/>
    </location>
</feature>
<feature type="mutagenesis site" description="Decreased binding to roX2 non-coding RNA, leading to decreased localization to male X chromosome." evidence="11 13">
    <original>H</original>
    <variation>E</variation>
    <location>
        <position position="196"/>
    </location>
</feature>
<feature type="mutagenesis site" description="Knockin flies show male lethality due to impaired binding to roX2 non-coding RNA." evidence="13">
    <original>NKKSASK</original>
    <variation>AEESASE</variation>
    <location>
        <begin position="223"/>
        <end position="229"/>
    </location>
</feature>
<feature type="mutagenesis site" description="Decreased binding to roX2 non-coding RNA, leading to decreased localization to male X chromosome." evidence="11 12">
    <original>K</original>
    <variation>E</variation>
    <location>
        <position position="225"/>
    </location>
</feature>
<feature type="mutagenesis site" description="Abolished helicase activity." evidence="14">
    <original>K</original>
    <variation>E</variation>
    <location>
        <position position="413"/>
    </location>
</feature>
<feature type="mutagenesis site" description="Decreased binding to roX2 non-coding RNA and association to male X chromosome." evidence="11">
    <original>HK</original>
    <variation>EEE</variation>
    <location>
        <begin position="1032"/>
        <end position="1033"/>
    </location>
</feature>
<feature type="sequence conflict" description="In Ref. 1; AAC41573." evidence="17" ref="1">
    <original>R</original>
    <variation>P</variation>
    <location>
        <position position="590"/>
    </location>
</feature>
<feature type="sequence conflict" description="In Ref. 1; AAC41573." evidence="17" ref="1">
    <original>K</original>
    <variation>N</variation>
    <location>
        <position position="1263"/>
    </location>
</feature>
<feature type="helix" evidence="23">
    <location>
        <begin position="3"/>
        <end position="12"/>
    </location>
</feature>
<feature type="turn" evidence="23">
    <location>
        <begin position="13"/>
        <end position="15"/>
    </location>
</feature>
<feature type="strand" evidence="23">
    <location>
        <begin position="19"/>
        <end position="24"/>
    </location>
</feature>
<feature type="strand" evidence="24">
    <location>
        <begin position="28"/>
        <end position="30"/>
    </location>
</feature>
<feature type="strand" evidence="23">
    <location>
        <begin position="33"/>
        <end position="38"/>
    </location>
</feature>
<feature type="strand" evidence="23">
    <location>
        <begin position="46"/>
        <end position="52"/>
    </location>
</feature>
<feature type="helix" evidence="23">
    <location>
        <begin position="53"/>
        <end position="70"/>
    </location>
</feature>
<feature type="helix" evidence="23">
    <location>
        <begin position="76"/>
        <end position="78"/>
    </location>
</feature>
<feature type="turn" evidence="22">
    <location>
        <begin position="121"/>
        <end position="123"/>
    </location>
</feature>
<feature type="helix" evidence="22">
    <location>
        <begin position="139"/>
        <end position="144"/>
    </location>
</feature>
<feature type="helix" evidence="22">
    <location>
        <begin position="147"/>
        <end position="154"/>
    </location>
</feature>
<feature type="helix" evidence="22">
    <location>
        <begin position="159"/>
        <end position="161"/>
    </location>
</feature>
<feature type="turn" evidence="22">
    <location>
        <begin position="162"/>
        <end position="164"/>
    </location>
</feature>
<feature type="helix" evidence="22">
    <location>
        <begin position="167"/>
        <end position="180"/>
    </location>
</feature>
<feature type="strand" evidence="22">
    <location>
        <begin position="188"/>
        <end position="193"/>
    </location>
</feature>
<feature type="helix" evidence="22">
    <location>
        <begin position="195"/>
        <end position="197"/>
    </location>
</feature>
<feature type="strand" evidence="22">
    <location>
        <begin position="199"/>
        <end position="208"/>
    </location>
</feature>
<feature type="helix" evidence="22">
    <location>
        <begin position="209"/>
        <end position="211"/>
    </location>
</feature>
<feature type="strand" evidence="22">
    <location>
        <begin position="213"/>
        <end position="223"/>
    </location>
</feature>
<feature type="helix" evidence="22">
    <location>
        <begin position="224"/>
        <end position="241"/>
    </location>
</feature>
<feature type="helix" evidence="22">
    <location>
        <begin position="269"/>
        <end position="281"/>
    </location>
</feature>
<feature type="helix" evidence="22">
    <location>
        <begin position="289"/>
        <end position="291"/>
    </location>
</feature>
<feature type="strand" evidence="22">
    <location>
        <begin position="296"/>
        <end position="298"/>
    </location>
</feature>
<feature type="turn" evidence="22">
    <location>
        <begin position="337"/>
        <end position="340"/>
    </location>
</feature>
<feature type="strand" evidence="22">
    <location>
        <begin position="345"/>
        <end position="350"/>
    </location>
</feature>
<feature type="helix" evidence="22">
    <location>
        <begin position="353"/>
        <end position="370"/>
    </location>
</feature>
<feature type="helix" evidence="22">
    <location>
        <begin position="372"/>
        <end position="382"/>
    </location>
</feature>
<feature type="helix" evidence="22">
    <location>
        <begin position="385"/>
        <end position="389"/>
    </location>
</feature>
<feature type="helix" evidence="22">
    <location>
        <begin position="390"/>
        <end position="399"/>
    </location>
</feature>
<feature type="strand" evidence="22">
    <location>
        <begin position="401"/>
        <end position="407"/>
    </location>
</feature>
<feature type="helix" evidence="22">
    <location>
        <begin position="413"/>
        <end position="427"/>
    </location>
</feature>
<feature type="helix" evidence="22">
    <location>
        <begin position="431"/>
        <end position="433"/>
    </location>
</feature>
<feature type="strand" evidence="22">
    <location>
        <begin position="435"/>
        <end position="442"/>
    </location>
</feature>
<feature type="helix" evidence="22">
    <location>
        <begin position="443"/>
        <end position="456"/>
    </location>
</feature>
<feature type="strand" evidence="22">
    <location>
        <begin position="463"/>
        <end position="469"/>
    </location>
</feature>
<feature type="strand" evidence="22">
    <location>
        <begin position="472"/>
        <end position="474"/>
    </location>
</feature>
<feature type="strand" evidence="22">
    <location>
        <begin position="478"/>
        <end position="486"/>
    </location>
</feature>
<feature type="helix" evidence="22">
    <location>
        <begin position="487"/>
        <end position="493"/>
    </location>
</feature>
<feature type="helix" evidence="22">
    <location>
        <begin position="494"/>
        <end position="496"/>
    </location>
</feature>
<feature type="strand" evidence="22">
    <location>
        <begin position="503"/>
        <end position="508"/>
    </location>
</feature>
<feature type="helix" evidence="22">
    <location>
        <begin position="509"/>
        <end position="511"/>
    </location>
</feature>
<feature type="helix" evidence="22">
    <location>
        <begin position="514"/>
        <end position="529"/>
    </location>
</feature>
<feature type="strand" evidence="22">
    <location>
        <begin position="534"/>
        <end position="541"/>
    </location>
</feature>
<feature type="helix" evidence="22">
    <location>
        <begin position="544"/>
        <end position="550"/>
    </location>
</feature>
<feature type="strand" evidence="22">
    <location>
        <begin position="556"/>
        <end position="559"/>
    </location>
</feature>
<feature type="strand" evidence="22">
    <location>
        <begin position="566"/>
        <end position="569"/>
    </location>
</feature>
<feature type="helix" evidence="22">
    <location>
        <begin position="571"/>
        <end position="578"/>
    </location>
</feature>
<feature type="helix" evidence="22">
    <location>
        <begin position="584"/>
        <end position="600"/>
    </location>
</feature>
<feature type="helix" evidence="22">
    <location>
        <begin position="606"/>
        <end position="608"/>
    </location>
</feature>
<feature type="helix" evidence="22">
    <location>
        <begin position="611"/>
        <end position="613"/>
    </location>
</feature>
<feature type="strand" evidence="25">
    <location>
        <begin position="617"/>
        <end position="619"/>
    </location>
</feature>
<feature type="helix" evidence="22">
    <location>
        <begin position="621"/>
        <end position="629"/>
    </location>
</feature>
<feature type="strand" evidence="22">
    <location>
        <begin position="632"/>
        <end position="634"/>
    </location>
</feature>
<feature type="helix" evidence="22">
    <location>
        <begin position="637"/>
        <end position="649"/>
    </location>
</feature>
<feature type="strand" evidence="22">
    <location>
        <begin position="655"/>
        <end position="659"/>
    </location>
</feature>
<feature type="helix" evidence="22">
    <location>
        <begin position="663"/>
        <end position="674"/>
    </location>
</feature>
<feature type="turn" evidence="22">
    <location>
        <begin position="677"/>
        <end position="680"/>
    </location>
</feature>
<feature type="turn" evidence="22">
    <location>
        <begin position="682"/>
        <end position="684"/>
    </location>
</feature>
<feature type="strand" evidence="22">
    <location>
        <begin position="685"/>
        <end position="690"/>
    </location>
</feature>
<feature type="strand" evidence="26">
    <location>
        <begin position="692"/>
        <end position="694"/>
    </location>
</feature>
<feature type="helix" evidence="22">
    <location>
        <begin position="696"/>
        <end position="700"/>
    </location>
</feature>
<feature type="turn" evidence="22">
    <location>
        <begin position="701"/>
        <end position="703"/>
    </location>
</feature>
<feature type="strand" evidence="22">
    <location>
        <begin position="711"/>
        <end position="716"/>
    </location>
</feature>
<feature type="helix" evidence="22">
    <location>
        <begin position="718"/>
        <end position="720"/>
    </location>
</feature>
<feature type="strand" evidence="22">
    <location>
        <begin position="721"/>
        <end position="723"/>
    </location>
</feature>
<feature type="strand" evidence="22">
    <location>
        <begin position="729"/>
        <end position="734"/>
    </location>
</feature>
<feature type="strand" evidence="22">
    <location>
        <begin position="737"/>
        <end position="744"/>
    </location>
</feature>
<feature type="turn" evidence="22">
    <location>
        <begin position="745"/>
        <end position="748"/>
    </location>
</feature>
<feature type="strand" evidence="22">
    <location>
        <begin position="749"/>
        <end position="756"/>
    </location>
</feature>
<feature type="helix" evidence="22">
    <location>
        <begin position="759"/>
        <end position="766"/>
    </location>
</feature>
<feature type="strand" evidence="22">
    <location>
        <begin position="769"/>
        <end position="773"/>
    </location>
</feature>
<feature type="strand" evidence="22">
    <location>
        <begin position="775"/>
        <end position="779"/>
    </location>
</feature>
<feature type="helix" evidence="22">
    <location>
        <begin position="783"/>
        <end position="788"/>
    </location>
</feature>
<feature type="helix" evidence="22">
    <location>
        <begin position="796"/>
        <end position="799"/>
    </location>
</feature>
<feature type="helix" evidence="22">
    <location>
        <begin position="803"/>
        <end position="811"/>
    </location>
</feature>
<feature type="helix" evidence="22">
    <location>
        <begin position="817"/>
        <end position="822"/>
    </location>
</feature>
<feature type="strand" evidence="22">
    <location>
        <begin position="824"/>
        <end position="826"/>
    </location>
</feature>
<feature type="helix" evidence="22">
    <location>
        <begin position="830"/>
        <end position="842"/>
    </location>
</feature>
<feature type="strand" evidence="26">
    <location>
        <begin position="845"/>
        <end position="847"/>
    </location>
</feature>
<feature type="strand" evidence="26">
    <location>
        <begin position="850"/>
        <end position="852"/>
    </location>
</feature>
<feature type="helix" evidence="22">
    <location>
        <begin position="854"/>
        <end position="860"/>
    </location>
</feature>
<feature type="strand" evidence="22">
    <location>
        <begin position="862"/>
        <end position="864"/>
    </location>
</feature>
<feature type="helix" evidence="22">
    <location>
        <begin position="866"/>
        <end position="877"/>
    </location>
</feature>
<feature type="helix" evidence="22">
    <location>
        <begin position="881"/>
        <end position="890"/>
    </location>
</feature>
<feature type="strand" evidence="27">
    <location>
        <begin position="902"/>
        <end position="904"/>
    </location>
</feature>
<feature type="helix" evidence="22">
    <location>
        <begin position="909"/>
        <end position="912"/>
    </location>
</feature>
<feature type="helix" evidence="22">
    <location>
        <begin position="913"/>
        <end position="915"/>
    </location>
</feature>
<feature type="helix" evidence="26">
    <location>
        <begin position="916"/>
        <end position="918"/>
    </location>
</feature>
<feature type="helix" evidence="22">
    <location>
        <begin position="921"/>
        <end position="937"/>
    </location>
</feature>
<feature type="helix" evidence="22">
    <location>
        <begin position="940"/>
        <end position="950"/>
    </location>
</feature>
<feature type="helix" evidence="22">
    <location>
        <begin position="954"/>
        <end position="973"/>
    </location>
</feature>
<feature type="helix" evidence="22">
    <location>
        <begin position="978"/>
        <end position="981"/>
    </location>
</feature>
<feature type="helix" evidence="22">
    <location>
        <begin position="995"/>
        <end position="1007"/>
    </location>
</feature>
<feature type="turn" evidence="22">
    <location>
        <begin position="1008"/>
        <end position="1010"/>
    </location>
</feature>
<feature type="strand" evidence="22">
    <location>
        <begin position="1012"/>
        <end position="1017"/>
    </location>
</feature>
<feature type="strand" evidence="22">
    <location>
        <begin position="1020"/>
        <end position="1023"/>
    </location>
</feature>
<feature type="helix" evidence="22">
    <location>
        <begin position="1024"/>
        <end position="1026"/>
    </location>
</feature>
<feature type="strand" evidence="22">
    <location>
        <begin position="1027"/>
        <end position="1031"/>
    </location>
</feature>
<feature type="strand" evidence="22">
    <location>
        <begin position="1049"/>
        <end position="1069"/>
    </location>
</feature>
<feature type="helix" evidence="22">
    <location>
        <begin position="1071"/>
        <end position="1077"/>
    </location>
</feature>
<feature type="strand" evidence="22">
    <location>
        <begin position="1082"/>
        <end position="1084"/>
    </location>
</feature>
<feature type="helix" evidence="22">
    <location>
        <begin position="1086"/>
        <end position="1088"/>
    </location>
</feature>
<feature type="strand" evidence="22">
    <location>
        <begin position="1090"/>
        <end position="1092"/>
    </location>
</feature>
<feature type="turn" evidence="22">
    <location>
        <begin position="1093"/>
        <end position="1095"/>
    </location>
</feature>
<feature type="strand" evidence="22">
    <location>
        <begin position="1096"/>
        <end position="1100"/>
    </location>
</feature>
<feature type="helix" evidence="22">
    <location>
        <begin position="1102"/>
        <end position="1124"/>
    </location>
</feature>
<feature type="helix" evidence="22">
    <location>
        <begin position="1126"/>
        <end position="1128"/>
    </location>
</feature>
<feature type="strand" evidence="25">
    <location>
        <begin position="1129"/>
        <end position="1131"/>
    </location>
</feature>
<feature type="helix" evidence="22">
    <location>
        <begin position="1134"/>
        <end position="1147"/>
    </location>
</feature>
<feature type="turn" evidence="22">
    <location>
        <begin position="1149"/>
        <end position="1152"/>
    </location>
</feature>
<keyword id="KW-0002">3D-structure</keyword>
<keyword id="KW-0025">Alternative splicing</keyword>
<keyword id="KW-0067">ATP-binding</keyword>
<keyword id="KW-0158">Chromosome</keyword>
<keyword id="KW-0347">Helicase</keyword>
<keyword id="KW-0378">Hydrolase</keyword>
<keyword id="KW-0547">Nucleotide-binding</keyword>
<keyword id="KW-0539">Nucleus</keyword>
<keyword id="KW-1185">Reference proteome</keyword>
<keyword id="KW-0677">Repeat</keyword>
<reference key="1">
    <citation type="journal article" date="1991" name="Cell">
        <title>The maleless protein associates with the X chromosome to regulate dosage compensation in Drosophila.</title>
        <authorList>
            <person name="Kuroda M.I."/>
            <person name="Kernan M.J."/>
            <person name="Kreber R."/>
            <person name="Ganetzky B."/>
            <person name="Baker B.S."/>
        </authorList>
    </citation>
    <scope>NUCLEOTIDE SEQUENCE [MRNA] (ISOFORMS 12 AND A)</scope>
    <scope>FUNCTION</scope>
    <scope>SUBCELLULAR LOCATION</scope>
    <scope>DEVELOPMENTAL STAGE</scope>
    <source>
        <tissue>Imaginal disk</tissue>
    </source>
</reference>
<reference key="2">
    <citation type="journal article" date="2000" name="Science">
        <title>The genome sequence of Drosophila melanogaster.</title>
        <authorList>
            <person name="Adams M.D."/>
            <person name="Celniker S.E."/>
            <person name="Holt R.A."/>
            <person name="Evans C.A."/>
            <person name="Gocayne J.D."/>
            <person name="Amanatides P.G."/>
            <person name="Scherer S.E."/>
            <person name="Li P.W."/>
            <person name="Hoskins R.A."/>
            <person name="Galle R.F."/>
            <person name="George R.A."/>
            <person name="Lewis S.E."/>
            <person name="Richards S."/>
            <person name="Ashburner M."/>
            <person name="Henderson S.N."/>
            <person name="Sutton G.G."/>
            <person name="Wortman J.R."/>
            <person name="Yandell M.D."/>
            <person name="Zhang Q."/>
            <person name="Chen L.X."/>
            <person name="Brandon R.C."/>
            <person name="Rogers Y.-H.C."/>
            <person name="Blazej R.G."/>
            <person name="Champe M."/>
            <person name="Pfeiffer B.D."/>
            <person name="Wan K.H."/>
            <person name="Doyle C."/>
            <person name="Baxter E.G."/>
            <person name="Helt G."/>
            <person name="Nelson C.R."/>
            <person name="Miklos G.L.G."/>
            <person name="Abril J.F."/>
            <person name="Agbayani A."/>
            <person name="An H.-J."/>
            <person name="Andrews-Pfannkoch C."/>
            <person name="Baldwin D."/>
            <person name="Ballew R.M."/>
            <person name="Basu A."/>
            <person name="Baxendale J."/>
            <person name="Bayraktaroglu L."/>
            <person name="Beasley E.M."/>
            <person name="Beeson K.Y."/>
            <person name="Benos P.V."/>
            <person name="Berman B.P."/>
            <person name="Bhandari D."/>
            <person name="Bolshakov S."/>
            <person name="Borkova D."/>
            <person name="Botchan M.R."/>
            <person name="Bouck J."/>
            <person name="Brokstein P."/>
            <person name="Brottier P."/>
            <person name="Burtis K.C."/>
            <person name="Busam D.A."/>
            <person name="Butler H."/>
            <person name="Cadieu E."/>
            <person name="Center A."/>
            <person name="Chandra I."/>
            <person name="Cherry J.M."/>
            <person name="Cawley S."/>
            <person name="Dahlke C."/>
            <person name="Davenport L.B."/>
            <person name="Davies P."/>
            <person name="de Pablos B."/>
            <person name="Delcher A."/>
            <person name="Deng Z."/>
            <person name="Mays A.D."/>
            <person name="Dew I."/>
            <person name="Dietz S.M."/>
            <person name="Dodson K."/>
            <person name="Doup L.E."/>
            <person name="Downes M."/>
            <person name="Dugan-Rocha S."/>
            <person name="Dunkov B.C."/>
            <person name="Dunn P."/>
            <person name="Durbin K.J."/>
            <person name="Evangelista C.C."/>
            <person name="Ferraz C."/>
            <person name="Ferriera S."/>
            <person name="Fleischmann W."/>
            <person name="Fosler C."/>
            <person name="Gabrielian A.E."/>
            <person name="Garg N.S."/>
            <person name="Gelbart W.M."/>
            <person name="Glasser K."/>
            <person name="Glodek A."/>
            <person name="Gong F."/>
            <person name="Gorrell J.H."/>
            <person name="Gu Z."/>
            <person name="Guan P."/>
            <person name="Harris M."/>
            <person name="Harris N.L."/>
            <person name="Harvey D.A."/>
            <person name="Heiman T.J."/>
            <person name="Hernandez J.R."/>
            <person name="Houck J."/>
            <person name="Hostin D."/>
            <person name="Houston K.A."/>
            <person name="Howland T.J."/>
            <person name="Wei M.-H."/>
            <person name="Ibegwam C."/>
            <person name="Jalali M."/>
            <person name="Kalush F."/>
            <person name="Karpen G.H."/>
            <person name="Ke Z."/>
            <person name="Kennison J.A."/>
            <person name="Ketchum K.A."/>
            <person name="Kimmel B.E."/>
            <person name="Kodira C.D."/>
            <person name="Kraft C.L."/>
            <person name="Kravitz S."/>
            <person name="Kulp D."/>
            <person name="Lai Z."/>
            <person name="Lasko P."/>
            <person name="Lei Y."/>
            <person name="Levitsky A.A."/>
            <person name="Li J.H."/>
            <person name="Li Z."/>
            <person name="Liang Y."/>
            <person name="Lin X."/>
            <person name="Liu X."/>
            <person name="Mattei B."/>
            <person name="McIntosh T.C."/>
            <person name="McLeod M.P."/>
            <person name="McPherson D."/>
            <person name="Merkulov G."/>
            <person name="Milshina N.V."/>
            <person name="Mobarry C."/>
            <person name="Morris J."/>
            <person name="Moshrefi A."/>
            <person name="Mount S.M."/>
            <person name="Moy M."/>
            <person name="Murphy B."/>
            <person name="Murphy L."/>
            <person name="Muzny D.M."/>
            <person name="Nelson D.L."/>
            <person name="Nelson D.R."/>
            <person name="Nelson K.A."/>
            <person name="Nixon K."/>
            <person name="Nusskern D.R."/>
            <person name="Pacleb J.M."/>
            <person name="Palazzolo M."/>
            <person name="Pittman G.S."/>
            <person name="Pan S."/>
            <person name="Pollard J."/>
            <person name="Puri V."/>
            <person name="Reese M.G."/>
            <person name="Reinert K."/>
            <person name="Remington K."/>
            <person name="Saunders R.D.C."/>
            <person name="Scheeler F."/>
            <person name="Shen H."/>
            <person name="Shue B.C."/>
            <person name="Siden-Kiamos I."/>
            <person name="Simpson M."/>
            <person name="Skupski M.P."/>
            <person name="Smith T.J."/>
            <person name="Spier E."/>
            <person name="Spradling A.C."/>
            <person name="Stapleton M."/>
            <person name="Strong R."/>
            <person name="Sun E."/>
            <person name="Svirskas R."/>
            <person name="Tector C."/>
            <person name="Turner R."/>
            <person name="Venter E."/>
            <person name="Wang A.H."/>
            <person name="Wang X."/>
            <person name="Wang Z.-Y."/>
            <person name="Wassarman D.A."/>
            <person name="Weinstock G.M."/>
            <person name="Weissenbach J."/>
            <person name="Williams S.M."/>
            <person name="Woodage T."/>
            <person name="Worley K.C."/>
            <person name="Wu D."/>
            <person name="Yang S."/>
            <person name="Yao Q.A."/>
            <person name="Ye J."/>
            <person name="Yeh R.-F."/>
            <person name="Zaveri J.S."/>
            <person name="Zhan M."/>
            <person name="Zhang G."/>
            <person name="Zhao Q."/>
            <person name="Zheng L."/>
            <person name="Zheng X.H."/>
            <person name="Zhong F.N."/>
            <person name="Zhong W."/>
            <person name="Zhou X."/>
            <person name="Zhu S.C."/>
            <person name="Zhu X."/>
            <person name="Smith H.O."/>
            <person name="Gibbs R.A."/>
            <person name="Myers E.W."/>
            <person name="Rubin G.M."/>
            <person name="Venter J.C."/>
        </authorList>
    </citation>
    <scope>NUCLEOTIDE SEQUENCE [LARGE SCALE GENOMIC DNA]</scope>
    <source>
        <strain>Berkeley</strain>
    </source>
</reference>
<reference key="3">
    <citation type="journal article" date="2002" name="Genome Biol.">
        <title>Annotation of the Drosophila melanogaster euchromatic genome: a systematic review.</title>
        <authorList>
            <person name="Misra S."/>
            <person name="Crosby M.A."/>
            <person name="Mungall C.J."/>
            <person name="Matthews B.B."/>
            <person name="Campbell K.S."/>
            <person name="Hradecky P."/>
            <person name="Huang Y."/>
            <person name="Kaminker J.S."/>
            <person name="Millburn G.H."/>
            <person name="Prochnik S.E."/>
            <person name="Smith C.D."/>
            <person name="Tupy J.L."/>
            <person name="Whitfield E.J."/>
            <person name="Bayraktaroglu L."/>
            <person name="Berman B.P."/>
            <person name="Bettencourt B.R."/>
            <person name="Celniker S.E."/>
            <person name="de Grey A.D.N.J."/>
            <person name="Drysdale R.A."/>
            <person name="Harris N.L."/>
            <person name="Richter J."/>
            <person name="Russo S."/>
            <person name="Schroeder A.J."/>
            <person name="Shu S.Q."/>
            <person name="Stapleton M."/>
            <person name="Yamada C."/>
            <person name="Ashburner M."/>
            <person name="Gelbart W.M."/>
            <person name="Rubin G.M."/>
            <person name="Lewis S.E."/>
        </authorList>
    </citation>
    <scope>GENOME REANNOTATION</scope>
    <scope>ALTERNATIVE SPLICING</scope>
    <source>
        <strain>Berkeley</strain>
    </source>
</reference>
<reference key="4">
    <citation type="submission" date="2003-08" db="EMBL/GenBank/DDBJ databases">
        <authorList>
            <person name="Stapleton M."/>
            <person name="Brokstein P."/>
            <person name="Hong L."/>
            <person name="Agbayani A."/>
            <person name="Carlson J.W."/>
            <person name="Champe M."/>
            <person name="Chavez C."/>
            <person name="Dorsett V."/>
            <person name="Dresnek D."/>
            <person name="Farfan D."/>
            <person name="Frise E."/>
            <person name="George R.A."/>
            <person name="Gonzalez M."/>
            <person name="Guarin H."/>
            <person name="Kronmiller B."/>
            <person name="Li P.W."/>
            <person name="Liao G."/>
            <person name="Miranda A."/>
            <person name="Mungall C.J."/>
            <person name="Nunoo J."/>
            <person name="Pacleb J.M."/>
            <person name="Paragas V."/>
            <person name="Park S."/>
            <person name="Patel S."/>
            <person name="Phouanenavong S."/>
            <person name="Wan K.H."/>
            <person name="Yu C."/>
            <person name="Lewis S.E."/>
            <person name="Rubin G.M."/>
            <person name="Celniker S.E."/>
        </authorList>
    </citation>
    <scope>NUCLEOTIDE SEQUENCE [LARGE SCALE MRNA] (ISOFORM B)</scope>
    <source>
        <strain>Berkeley</strain>
        <tissue>Embryo</tissue>
    </source>
</reference>
<reference key="5">
    <citation type="journal article" date="1997" name="EMBO J.">
        <title>The NTPase/helicase activities of Drosophila maleless, an essential factor in dosage compensation.</title>
        <authorList>
            <person name="Lee C.G."/>
            <person name="Chang K.A."/>
            <person name="Kuroda M.I."/>
            <person name="Hurwitz J."/>
        </authorList>
    </citation>
    <scope>FUNCTION</scope>
    <scope>CATALYTIC ACTIVITY</scope>
    <scope>MUTAGENESIS OF LYS-413</scope>
</reference>
<reference key="6">
    <citation type="journal article" date="2000" name="Curr. Biol.">
        <title>Ordered assembly of roX RNAs into MSL complexes on the dosage-compensated X chromosome in Drosophila.</title>
        <authorList>
            <person name="Meller V.H."/>
            <person name="Gordadze P.R."/>
            <person name="Park Y."/>
            <person name="Chu X."/>
            <person name="Stuckenholz C."/>
            <person name="Kelley R.L."/>
            <person name="Kuroda M.I."/>
        </authorList>
    </citation>
    <scope>IDENTIFICATION IN THE MSL COMPLEX</scope>
</reference>
<reference key="7">
    <citation type="journal article" date="2000" name="Nature">
        <title>Chromodomains are protein-RNA interaction modules.</title>
        <authorList>
            <person name="Akhtar A."/>
            <person name="Zink D."/>
            <person name="Becker P.B."/>
        </authorList>
    </citation>
    <scope>IDENTIFICATION IN THE MSL COMPLEX</scope>
</reference>
<reference key="8">
    <citation type="journal article" date="2013" name="Mol. Cell">
        <title>Tandem stem-loops in roX RNAs act together to mediate X chromosome dosage compensation in Drosophila.</title>
        <authorList>
            <person name="Ilik I.A."/>
            <person name="Quinn J.J."/>
            <person name="Georgiev P."/>
            <person name="Tavares-Cadete F."/>
            <person name="Maticzka D."/>
            <person name="Toscano S."/>
            <person name="Wan Y."/>
            <person name="Spitale R.C."/>
            <person name="Luscombe N."/>
            <person name="Backofen R."/>
            <person name="Chang H.Y."/>
            <person name="Akhtar A."/>
        </authorList>
    </citation>
    <scope>FUNCTION</scope>
    <scope>IDENTIFICATION IN THE MSL COMPLEX</scope>
</reference>
<reference key="9">
    <citation type="journal article" date="2013" name="Transcription">
        <title>Topoisomerase II plays a role in dosage compensation in Drosophila.</title>
        <authorList>
            <person name="Cugusi S."/>
            <person name="Ramos E."/>
            <person name="Ling H."/>
            <person name="Yokoyama R."/>
            <person name="Luk K.M."/>
            <person name="Lucchesi J.C."/>
        </authorList>
    </citation>
    <scope>INTERACTION WITH TOP2</scope>
</reference>
<reference key="10">
    <citation type="journal article" date="2014" name="Nat. Commun.">
        <title>UNR facilitates the interaction of MLE with the lncRNA roX2 during Drosophila dosage compensation.</title>
        <authorList>
            <person name="Militti C."/>
            <person name="Maenner S."/>
            <person name="Becker P.B."/>
            <person name="Gebauer F."/>
        </authorList>
    </citation>
    <scope>FUNCTION</scope>
    <scope>INTERACTION WITH UNR</scope>
</reference>
<reference evidence="19" key="11">
    <citation type="journal article" date="2015" name="Mol. Cell">
        <title>Structure of the RNA helicase MLE reveals the molecular mechanisms for uridine specificity and RNA-ATP coupling.</title>
        <authorList>
            <person name="Prabu J.R."/>
            <person name="Mueller M."/>
            <person name="Thomae A.W."/>
            <person name="Schuessler S."/>
            <person name="Bonneau F."/>
            <person name="Becker P.B."/>
            <person name="Conti E."/>
        </authorList>
    </citation>
    <scope>X-RAY CRYSTALLOGRAPHY (2.08 ANGSTROMS) IN COMPLEX WITH RNA; ADP AND MG(2+)</scope>
    <scope>FUNCTION</scope>
    <scope>CATALYTIC ACTIVITY</scope>
    <scope>MUTAGENESIS OF HIS-196; LYS-225 AND 1032-HIS-LYS-1033</scope>
</reference>
<reference evidence="20" key="12">
    <citation type="journal article" date="2019" name="Nucleic Acids Res.">
        <title>Structural insights reveal the specific recognition of roX RNA by the dsRNA-binding domains of the RNA helicase MLE and its indispensable role in dosage compensation in Drosophila.</title>
        <authorList>
            <person name="Lv M."/>
            <person name="Yao Y."/>
            <person name="Li F."/>
            <person name="Xu L."/>
            <person name="Yang L."/>
            <person name="Gong Q."/>
            <person name="Xu Y.Z."/>
            <person name="Shi Y."/>
            <person name="Fan Y.J."/>
            <person name="Tang Y."/>
        </authorList>
    </citation>
    <scope>X-RAY CRYSTALLOGRAPHY (2.90 ANGSTROMS) OF 1-264 IN COMPLEX WITH RNA</scope>
    <scope>FUNCTION</scope>
    <scope>SUBCELLULAR LOCATION</scope>
    <scope>MUTAGENESIS OF LYS-4; LYS-53; LYS-54 AND LYS-225</scope>
</reference>
<reference evidence="21" key="13">
    <citation type="journal article" date="2019" name="Nucleic Acids Res.">
        <title>Structure, dynamics and roX2-lncRNA binding of tandem double-stranded RNA binding domains dsRBD1,2 of Drosophila helicase Maleless.</title>
        <authorList>
            <person name="Ankush Jagtap P.K."/>
            <person name="Mueller M."/>
            <person name="Masiewicz P."/>
            <person name="von Buelow S."/>
            <person name="Hollmann N.M."/>
            <person name="Chen P.C."/>
            <person name="Simon B."/>
            <person name="Thomae A.W."/>
            <person name="Becker P.B."/>
            <person name="Hennig J."/>
        </authorList>
    </citation>
    <scope>STRUCTURE BY NMR OF 1-257</scope>
    <scope>FUNCTION</scope>
    <scope>SUBCELLULAR LOCATION</scope>
    <scope>MUTAGENESIS OF 4-LYS-SER-5; ASN-29; 52-ASN--LYS-58; 171-LYS--ASN-175; GLU-172; GLU-195; HIS-196 AND 223-ASN--LYS-229</scope>
</reference>